<evidence type="ECO:0000256" key="1">
    <source>
        <dbReference type="SAM" id="MobiDB-lite"/>
    </source>
</evidence>
<evidence type="ECO:0000305" key="2"/>
<keyword id="KW-0158">Chromosome</keyword>
<keyword id="KW-0217">Developmental protein</keyword>
<keyword id="KW-0221">Differentiation</keyword>
<keyword id="KW-0226">DNA condensation</keyword>
<keyword id="KW-0238">DNA-binding</keyword>
<keyword id="KW-0544">Nucleosome core</keyword>
<keyword id="KW-0539">Nucleus</keyword>
<keyword id="KW-0744">Spermatogenesis</keyword>
<organism>
    <name type="scientific">Petrogale xanthopus</name>
    <name type="common">Yellow-footed rock wallaby</name>
    <dbReference type="NCBI Taxonomy" id="9325"/>
    <lineage>
        <taxon>Eukaryota</taxon>
        <taxon>Metazoa</taxon>
        <taxon>Chordata</taxon>
        <taxon>Craniata</taxon>
        <taxon>Vertebrata</taxon>
        <taxon>Euteleostomi</taxon>
        <taxon>Mammalia</taxon>
        <taxon>Metatheria</taxon>
        <taxon>Diprotodontia</taxon>
        <taxon>Macropodidae</taxon>
        <taxon>Petrogale</taxon>
    </lineage>
</organism>
<name>HSP1_PETXA</name>
<proteinExistence type="evidence at transcript level"/>
<sequence>MARYRHSXSRSRSRYRRRRRRRSRYRSRRRRYRGRRRRRSRRGRRRRGYSRRRYSRRRRRRY</sequence>
<accession>Q9GLQ7</accession>
<protein>
    <recommendedName>
        <fullName>Sperm protamine P1</fullName>
    </recommendedName>
</protein>
<dbReference type="EMBL" id="AF187535">
    <property type="protein sequence ID" value="AAG27952.1"/>
    <property type="molecule type" value="Genomic_DNA"/>
</dbReference>
<dbReference type="GO" id="GO:0000786">
    <property type="term" value="C:nucleosome"/>
    <property type="evidence" value="ECO:0007669"/>
    <property type="project" value="UniProtKB-KW"/>
</dbReference>
<dbReference type="GO" id="GO:0005634">
    <property type="term" value="C:nucleus"/>
    <property type="evidence" value="ECO:0007669"/>
    <property type="project" value="UniProtKB-SubCell"/>
</dbReference>
<dbReference type="GO" id="GO:0003677">
    <property type="term" value="F:DNA binding"/>
    <property type="evidence" value="ECO:0007669"/>
    <property type="project" value="UniProtKB-KW"/>
</dbReference>
<dbReference type="GO" id="GO:0030261">
    <property type="term" value="P:chromosome condensation"/>
    <property type="evidence" value="ECO:0007669"/>
    <property type="project" value="UniProtKB-KW"/>
</dbReference>
<dbReference type="GO" id="GO:0035092">
    <property type="term" value="P:sperm DNA condensation"/>
    <property type="evidence" value="ECO:0007669"/>
    <property type="project" value="InterPro"/>
</dbReference>
<dbReference type="InterPro" id="IPR000221">
    <property type="entry name" value="Protamine_P1"/>
</dbReference>
<dbReference type="PROSITE" id="PS00048">
    <property type="entry name" value="PROTAMINE_P1"/>
    <property type="match status" value="1"/>
</dbReference>
<reference key="1">
    <citation type="journal article" date="2000" name="J. Mammal. Evol.">
        <title>Intergeneric relationships among Macropodoidea (Metatheria: Diprotodontia) and the chronicle of kangaroo evolution.</title>
        <authorList>
            <person name="Burk A."/>
            <person name="Springer M.S."/>
        </authorList>
    </citation>
    <scope>NUCLEOTIDE SEQUENCE [GENOMIC DNA]</scope>
</reference>
<comment type="function">
    <text>Protamines substitute for histones in the chromatin of sperm during the haploid phase of spermatogenesis. They compact sperm DNA into a highly condensed, stable and inactive complex.</text>
</comment>
<comment type="subcellular location">
    <subcellularLocation>
        <location>Nucleus</location>
    </subcellularLocation>
    <subcellularLocation>
        <location>Chromosome</location>
    </subcellularLocation>
</comment>
<comment type="tissue specificity">
    <text>Testis.</text>
</comment>
<comment type="similarity">
    <text evidence="2">Belongs to the protamine P1 family.</text>
</comment>
<gene>
    <name type="primary">PRM1</name>
</gene>
<feature type="chain" id="PRO_0000191526" description="Sperm protamine P1">
    <location>
        <begin position="1"/>
        <end position="62"/>
    </location>
</feature>
<feature type="region of interest" description="Disordered" evidence="1">
    <location>
        <begin position="1"/>
        <end position="62"/>
    </location>
</feature>